<comment type="function">
    <text evidence="1">NDH-1 shuttles electrons from NADH, via FMN and iron-sulfur (Fe-S) centers, to quinones in the respiratory chain. The immediate electron acceptor for the enzyme in this species is believed to be ubiquinone. Couples the redox reaction to proton translocation (for every two electrons transferred, four hydrogen ions are translocated across the cytoplasmic membrane), and thus conserves the redox energy in a proton gradient.</text>
</comment>
<comment type="catalytic activity">
    <reaction evidence="1">
        <text>a quinone + NADH + 5 H(+)(in) = a quinol + NAD(+) + 4 H(+)(out)</text>
        <dbReference type="Rhea" id="RHEA:57888"/>
        <dbReference type="ChEBI" id="CHEBI:15378"/>
        <dbReference type="ChEBI" id="CHEBI:24646"/>
        <dbReference type="ChEBI" id="CHEBI:57540"/>
        <dbReference type="ChEBI" id="CHEBI:57945"/>
        <dbReference type="ChEBI" id="CHEBI:132124"/>
    </reaction>
</comment>
<comment type="subunit">
    <text evidence="1">NDH-1 is composed of 14 different subunits. Subunits NuoA, H, J, K, L, M, N constitute the membrane sector of the complex.</text>
</comment>
<comment type="subcellular location">
    <subcellularLocation>
        <location evidence="1">Cell inner membrane</location>
        <topology evidence="1">Multi-pass membrane protein</topology>
    </subcellularLocation>
</comment>
<comment type="similarity">
    <text evidence="1">Belongs to the complex I subunit 4L family.</text>
</comment>
<evidence type="ECO:0000255" key="1">
    <source>
        <dbReference type="HAMAP-Rule" id="MF_01456"/>
    </source>
</evidence>
<feature type="chain" id="PRO_0000390270" description="NADH-quinone oxidoreductase subunit K">
    <location>
        <begin position="1"/>
        <end position="100"/>
    </location>
</feature>
<feature type="transmembrane region" description="Helical" evidence="1">
    <location>
        <begin position="2"/>
        <end position="22"/>
    </location>
</feature>
<feature type="transmembrane region" description="Helical" evidence="1">
    <location>
        <begin position="28"/>
        <end position="48"/>
    </location>
</feature>
<feature type="transmembrane region" description="Helical" evidence="1">
    <location>
        <begin position="63"/>
        <end position="83"/>
    </location>
</feature>
<proteinExistence type="inferred from homology"/>
<keyword id="KW-0997">Cell inner membrane</keyword>
<keyword id="KW-1003">Cell membrane</keyword>
<keyword id="KW-0472">Membrane</keyword>
<keyword id="KW-0520">NAD</keyword>
<keyword id="KW-0874">Quinone</keyword>
<keyword id="KW-1185">Reference proteome</keyword>
<keyword id="KW-1278">Translocase</keyword>
<keyword id="KW-0812">Transmembrane</keyword>
<keyword id="KW-1133">Transmembrane helix</keyword>
<keyword id="KW-0813">Transport</keyword>
<keyword id="KW-0830">Ubiquinone</keyword>
<protein>
    <recommendedName>
        <fullName evidence="1">NADH-quinone oxidoreductase subunit K</fullName>
        <ecNumber evidence="1">7.1.1.-</ecNumber>
    </recommendedName>
    <alternativeName>
        <fullName evidence="1">NADH dehydrogenase I subunit K</fullName>
    </alternativeName>
    <alternativeName>
        <fullName evidence="1">NDH-1 subunit K</fullName>
    </alternativeName>
</protein>
<dbReference type="EC" id="7.1.1.-" evidence="1"/>
<dbReference type="EMBL" id="BX571658">
    <property type="protein sequence ID" value="CAE09624.1"/>
    <property type="molecule type" value="Genomic_DNA"/>
</dbReference>
<dbReference type="RefSeq" id="WP_011138424.1">
    <property type="nucleotide sequence ID" value="NC_005090.1"/>
</dbReference>
<dbReference type="SMR" id="Q7MA40"/>
<dbReference type="STRING" id="273121.WS0484"/>
<dbReference type="KEGG" id="wsu:WS0484"/>
<dbReference type="eggNOG" id="COG0713">
    <property type="taxonomic scope" value="Bacteria"/>
</dbReference>
<dbReference type="HOGENOM" id="CLU_144724_0_0_7"/>
<dbReference type="Proteomes" id="UP000000422">
    <property type="component" value="Chromosome"/>
</dbReference>
<dbReference type="GO" id="GO:0030964">
    <property type="term" value="C:NADH dehydrogenase complex"/>
    <property type="evidence" value="ECO:0007669"/>
    <property type="project" value="TreeGrafter"/>
</dbReference>
<dbReference type="GO" id="GO:0005886">
    <property type="term" value="C:plasma membrane"/>
    <property type="evidence" value="ECO:0007669"/>
    <property type="project" value="UniProtKB-SubCell"/>
</dbReference>
<dbReference type="GO" id="GO:0050136">
    <property type="term" value="F:NADH:ubiquinone reductase (non-electrogenic) activity"/>
    <property type="evidence" value="ECO:0007669"/>
    <property type="project" value="UniProtKB-UniRule"/>
</dbReference>
<dbReference type="GO" id="GO:0048038">
    <property type="term" value="F:quinone binding"/>
    <property type="evidence" value="ECO:0007669"/>
    <property type="project" value="UniProtKB-KW"/>
</dbReference>
<dbReference type="GO" id="GO:0042773">
    <property type="term" value="P:ATP synthesis coupled electron transport"/>
    <property type="evidence" value="ECO:0007669"/>
    <property type="project" value="InterPro"/>
</dbReference>
<dbReference type="FunFam" id="1.10.287.3510:FF:000001">
    <property type="entry name" value="NADH-quinone oxidoreductase subunit K"/>
    <property type="match status" value="1"/>
</dbReference>
<dbReference type="Gene3D" id="1.10.287.3510">
    <property type="match status" value="1"/>
</dbReference>
<dbReference type="HAMAP" id="MF_01456">
    <property type="entry name" value="NDH1_NuoK"/>
    <property type="match status" value="1"/>
</dbReference>
<dbReference type="InterPro" id="IPR001133">
    <property type="entry name" value="NADH_UbQ_OxRdtase_chain4L/K"/>
</dbReference>
<dbReference type="InterPro" id="IPR039428">
    <property type="entry name" value="NUOK/Mnh_C1-like"/>
</dbReference>
<dbReference type="NCBIfam" id="NF004320">
    <property type="entry name" value="PRK05715.1-2"/>
    <property type="match status" value="1"/>
</dbReference>
<dbReference type="NCBIfam" id="NF004321">
    <property type="entry name" value="PRK05715.1-3"/>
    <property type="match status" value="1"/>
</dbReference>
<dbReference type="NCBIfam" id="NF004323">
    <property type="entry name" value="PRK05715.1-5"/>
    <property type="match status" value="1"/>
</dbReference>
<dbReference type="PANTHER" id="PTHR11434:SF21">
    <property type="entry name" value="NADH DEHYDROGENASE SUBUNIT 4L-RELATED"/>
    <property type="match status" value="1"/>
</dbReference>
<dbReference type="PANTHER" id="PTHR11434">
    <property type="entry name" value="NADH-UBIQUINONE OXIDOREDUCTASE SUBUNIT ND4L"/>
    <property type="match status" value="1"/>
</dbReference>
<dbReference type="Pfam" id="PF00420">
    <property type="entry name" value="Oxidored_q2"/>
    <property type="match status" value="1"/>
</dbReference>
<reference key="1">
    <citation type="journal article" date="2003" name="Proc. Natl. Acad. Sci. U.S.A.">
        <title>Complete genome sequence and analysis of Wolinella succinogenes.</title>
        <authorList>
            <person name="Baar C."/>
            <person name="Eppinger M."/>
            <person name="Raddatz G."/>
            <person name="Simon J."/>
            <person name="Lanz C."/>
            <person name="Klimmek O."/>
            <person name="Nandakumar R."/>
            <person name="Gross R."/>
            <person name="Rosinus A."/>
            <person name="Keller H."/>
            <person name="Jagtap P."/>
            <person name="Linke B."/>
            <person name="Meyer F."/>
            <person name="Lederer H."/>
            <person name="Schuster S.C."/>
        </authorList>
    </citation>
    <scope>NUCLEOTIDE SEQUENCE [LARGE SCALE GENOMIC DNA]</scope>
    <source>
        <strain>ATCC 29543 / DSM 1740 / CCUG 13145 / JCM 31913 / LMG 7466 / NCTC 11488 / FDC 602W</strain>
    </source>
</reference>
<accession>Q7MA40</accession>
<gene>
    <name evidence="1" type="primary">nuoK</name>
    <name type="ordered locus">WS0484</name>
</gene>
<sequence length="100" mass="11034">MVTLNHYLILSSLLFMIGLVGVMRRKNLLMLFFSTEIMLNAVNVGLVAAGKYMNDMAGQMFSFFIIAVAASEVAVGLGLLILWYKKNGSLDLDNLQLMKG</sequence>
<organism>
    <name type="scientific">Wolinella succinogenes (strain ATCC 29543 / DSM 1740 / CCUG 13145 / JCM 31913 / LMG 7466 / NCTC 11488 / FDC 602W)</name>
    <name type="common">Vibrio succinogenes</name>
    <dbReference type="NCBI Taxonomy" id="273121"/>
    <lineage>
        <taxon>Bacteria</taxon>
        <taxon>Pseudomonadati</taxon>
        <taxon>Campylobacterota</taxon>
        <taxon>Epsilonproteobacteria</taxon>
        <taxon>Campylobacterales</taxon>
        <taxon>Helicobacteraceae</taxon>
        <taxon>Wolinella</taxon>
    </lineage>
</organism>
<name>NUOK_WOLSU</name>